<accession>B2FSI8</accession>
<comment type="subunit">
    <text evidence="1">Part of the 50S ribosomal subunit.</text>
</comment>
<comment type="similarity">
    <text evidence="1">Belongs to the bacterial ribosomal protein bL31 family. Type B subfamily.</text>
</comment>
<evidence type="ECO:0000255" key="1">
    <source>
        <dbReference type="HAMAP-Rule" id="MF_00502"/>
    </source>
</evidence>
<evidence type="ECO:0000305" key="2"/>
<sequence>MKADIHPNYRDVVFHDVTSDFKILTRSTMATKETIQWEDGNEYPLVKVEISSASHPFYTGKHKVIDTSGRIDKFQKRYAR</sequence>
<gene>
    <name evidence="1" type="primary">rpmE2</name>
    <name type="ordered locus">Smlt3836</name>
</gene>
<dbReference type="EMBL" id="AM743169">
    <property type="protein sequence ID" value="CAQ47242.1"/>
    <property type="molecule type" value="Genomic_DNA"/>
</dbReference>
<dbReference type="RefSeq" id="WP_005410871.1">
    <property type="nucleotide sequence ID" value="NC_010943.1"/>
</dbReference>
<dbReference type="SMR" id="B2FSI8"/>
<dbReference type="EnsemblBacteria" id="CAQ47242">
    <property type="protein sequence ID" value="CAQ47242"/>
    <property type="gene ID" value="Smlt3836"/>
</dbReference>
<dbReference type="KEGG" id="sml:Smlt3836"/>
<dbReference type="eggNOG" id="COG0254">
    <property type="taxonomic scope" value="Bacteria"/>
</dbReference>
<dbReference type="HOGENOM" id="CLU_114306_2_2_6"/>
<dbReference type="Proteomes" id="UP000008840">
    <property type="component" value="Chromosome"/>
</dbReference>
<dbReference type="GO" id="GO:1990904">
    <property type="term" value="C:ribonucleoprotein complex"/>
    <property type="evidence" value="ECO:0007669"/>
    <property type="project" value="UniProtKB-KW"/>
</dbReference>
<dbReference type="GO" id="GO:0005840">
    <property type="term" value="C:ribosome"/>
    <property type="evidence" value="ECO:0007669"/>
    <property type="project" value="UniProtKB-KW"/>
</dbReference>
<dbReference type="GO" id="GO:0003735">
    <property type="term" value="F:structural constituent of ribosome"/>
    <property type="evidence" value="ECO:0007669"/>
    <property type="project" value="InterPro"/>
</dbReference>
<dbReference type="GO" id="GO:0006412">
    <property type="term" value="P:translation"/>
    <property type="evidence" value="ECO:0007669"/>
    <property type="project" value="UniProtKB-UniRule"/>
</dbReference>
<dbReference type="Gene3D" id="4.10.830.30">
    <property type="entry name" value="Ribosomal protein L31"/>
    <property type="match status" value="1"/>
</dbReference>
<dbReference type="HAMAP" id="MF_00502">
    <property type="entry name" value="Ribosomal_bL31_2"/>
    <property type="match status" value="1"/>
</dbReference>
<dbReference type="InterPro" id="IPR034704">
    <property type="entry name" value="Ribosomal_bL28/bL31-like_sf"/>
</dbReference>
<dbReference type="InterPro" id="IPR002150">
    <property type="entry name" value="Ribosomal_bL31"/>
</dbReference>
<dbReference type="InterPro" id="IPR027493">
    <property type="entry name" value="Ribosomal_bL31_B"/>
</dbReference>
<dbReference type="InterPro" id="IPR042105">
    <property type="entry name" value="Ribosomal_bL31_sf"/>
</dbReference>
<dbReference type="NCBIfam" id="TIGR00105">
    <property type="entry name" value="L31"/>
    <property type="match status" value="1"/>
</dbReference>
<dbReference type="NCBIfam" id="NF002462">
    <property type="entry name" value="PRK01678.1"/>
    <property type="match status" value="1"/>
</dbReference>
<dbReference type="PANTHER" id="PTHR33280">
    <property type="entry name" value="50S RIBOSOMAL PROTEIN L31, CHLOROPLASTIC"/>
    <property type="match status" value="1"/>
</dbReference>
<dbReference type="PANTHER" id="PTHR33280:SF6">
    <property type="entry name" value="LARGE RIBOSOMAL SUBUNIT PROTEIN BL31A"/>
    <property type="match status" value="1"/>
</dbReference>
<dbReference type="Pfam" id="PF01197">
    <property type="entry name" value="Ribosomal_L31"/>
    <property type="match status" value="1"/>
</dbReference>
<dbReference type="PRINTS" id="PR01249">
    <property type="entry name" value="RIBOSOMALL31"/>
</dbReference>
<dbReference type="SUPFAM" id="SSF143800">
    <property type="entry name" value="L28p-like"/>
    <property type="match status" value="1"/>
</dbReference>
<dbReference type="PROSITE" id="PS01143">
    <property type="entry name" value="RIBOSOMAL_L31"/>
    <property type="match status" value="1"/>
</dbReference>
<name>RL31B_STRMK</name>
<organism>
    <name type="scientific">Stenotrophomonas maltophilia (strain K279a)</name>
    <dbReference type="NCBI Taxonomy" id="522373"/>
    <lineage>
        <taxon>Bacteria</taxon>
        <taxon>Pseudomonadati</taxon>
        <taxon>Pseudomonadota</taxon>
        <taxon>Gammaproteobacteria</taxon>
        <taxon>Lysobacterales</taxon>
        <taxon>Lysobacteraceae</taxon>
        <taxon>Stenotrophomonas</taxon>
        <taxon>Stenotrophomonas maltophilia group</taxon>
    </lineage>
</organism>
<keyword id="KW-1185">Reference proteome</keyword>
<keyword id="KW-0687">Ribonucleoprotein</keyword>
<keyword id="KW-0689">Ribosomal protein</keyword>
<protein>
    <recommendedName>
        <fullName evidence="1">Large ribosomal subunit protein bL31B</fullName>
    </recommendedName>
    <alternativeName>
        <fullName evidence="2">50S ribosomal protein L31 type B</fullName>
    </alternativeName>
</protein>
<reference key="1">
    <citation type="journal article" date="2008" name="Genome Biol.">
        <title>The complete genome, comparative and functional analysis of Stenotrophomonas maltophilia reveals an organism heavily shielded by drug resistance determinants.</title>
        <authorList>
            <person name="Crossman L.C."/>
            <person name="Gould V.C."/>
            <person name="Dow J.M."/>
            <person name="Vernikos G.S."/>
            <person name="Okazaki A."/>
            <person name="Sebaihia M."/>
            <person name="Saunders D."/>
            <person name="Arrowsmith C."/>
            <person name="Carver T."/>
            <person name="Peters N."/>
            <person name="Adlem E."/>
            <person name="Kerhornou A."/>
            <person name="Lord A."/>
            <person name="Murphy L."/>
            <person name="Seeger K."/>
            <person name="Squares R."/>
            <person name="Rutter S."/>
            <person name="Quail M.A."/>
            <person name="Rajandream M.A."/>
            <person name="Harris D."/>
            <person name="Churcher C."/>
            <person name="Bentley S.D."/>
            <person name="Parkhill J."/>
            <person name="Thomson N.R."/>
            <person name="Avison M.B."/>
        </authorList>
    </citation>
    <scope>NUCLEOTIDE SEQUENCE [LARGE SCALE GENOMIC DNA]</scope>
    <source>
        <strain>K279a</strain>
    </source>
</reference>
<feature type="chain" id="PRO_1000126842" description="Large ribosomal subunit protein bL31B">
    <location>
        <begin position="1"/>
        <end position="80"/>
    </location>
</feature>
<proteinExistence type="inferred from homology"/>